<comment type="function">
    <text evidence="2">UDP-galactose transporter involved in the synthesis of galactose-containing glycans. Plays a role in quiescence of the innate immune response, possibly by regulating glycosylation of the Toll pathway ligand spz.</text>
</comment>
<comment type="subcellular location">
    <subcellularLocation>
        <location evidence="2">Golgi apparatus membrane</location>
        <topology evidence="1">Multi-pass membrane protein</topology>
    </subcellularLocation>
</comment>
<comment type="developmental stage">
    <text evidence="2">Detected in lymph glands from late third-instar larvae (at protein level).</text>
</comment>
<comment type="disruption phenotype">
    <text evidence="2">Lethal in late larvae and early pupal stages. In immunologically unchallenged third-instar larvae, displays abnormalities of the immune organs, including melanotic cells in the hemocoel and melanotic tumors in the lymph glands; in the primary and secondary lobes, shows activation of lamellocytes and reduced numbers of hematocyte progenitor cells and plasmatocytes. In addition, displays hyperactivation of immune signal transduction via the Toll, JAK/STAT and JNK pathways; shows reduced expression of galactose-containing glycans affecting also spz glycosylation.</text>
</comment>
<comment type="miscellaneous">
    <text evidence="3">The gene name means 'Buddha with a thousand hands manipulating tools to protect us' in Japanese.</text>
</comment>
<comment type="similarity">
    <text evidence="4">Belongs to the nucleotide-sugar transporter family.</text>
</comment>
<comment type="sequence caution" evidence="4">
    <conflict type="frameshift">
        <sequence resource="EMBL-CDS" id="AAM29464"/>
    </conflict>
</comment>
<feature type="chain" id="PRO_0000441162" description="UDP-galactose transporter senju" evidence="4">
    <location>
        <begin position="1"/>
        <end position="388"/>
    </location>
</feature>
<feature type="transmembrane region" description="Helical" evidence="1">
    <location>
        <begin position="13"/>
        <end position="33"/>
    </location>
</feature>
<feature type="transmembrane region" description="Helical" evidence="1">
    <location>
        <begin position="46"/>
        <end position="66"/>
    </location>
</feature>
<feature type="transmembrane region" description="Helical" evidence="1">
    <location>
        <begin position="84"/>
        <end position="104"/>
    </location>
</feature>
<feature type="transmembrane region" description="Helical" evidence="1">
    <location>
        <begin position="113"/>
        <end position="133"/>
    </location>
</feature>
<feature type="transmembrane region" description="Helical" evidence="1">
    <location>
        <begin position="142"/>
        <end position="162"/>
    </location>
</feature>
<feature type="transmembrane region" description="Helical" evidence="1">
    <location>
        <begin position="202"/>
        <end position="222"/>
    </location>
</feature>
<feature type="transmembrane region" description="Helical" evidence="1">
    <location>
        <begin position="236"/>
        <end position="256"/>
    </location>
</feature>
<feature type="transmembrane region" description="Helical" evidence="1">
    <location>
        <begin position="276"/>
        <end position="296"/>
    </location>
</feature>
<feature type="transmembrane region" description="Helical" evidence="1">
    <location>
        <begin position="309"/>
        <end position="329"/>
    </location>
</feature>
<feature type="transmembrane region" description="Helical" evidence="1">
    <location>
        <begin position="331"/>
        <end position="351"/>
    </location>
</feature>
<feature type="sequence conflict" description="In Ref. 3; AAM29464." evidence="4" ref="3">
    <original>T</original>
    <variation>A</variation>
    <location>
        <position position="125"/>
    </location>
</feature>
<sequence length="388" mass="43616">MSTNWRELFPTKLTFVIFLLYMSLFIGQGIFVTASQESNNSYGYNTVTVVLLTEVFKLIVSTCLYCRDNNLRSLVRDVQKDRNVLGLYMVPAFLYCLYNNLAFVNLATFDPTTYYLLLQLRVVVTGILFQIIFKKYLSQRQWISLILLTLGCMMKQVDFGSFYSDANDDSESAAIQQQLQSHNKTTSAETHAHGKNMSGFDFSLSAVFILAQTICSCLAGVYNEYLLKDKGADVNIFVQNVFMYLDSIVCNAVILLLRGELLDAFSPQNLGSIMRFSVLIIIVNNAAIGIVTSFFLKYMNSILKTFASALELLFTAVLCYFLFSIPIYMNTALAIAVVSYAIYLYTQSPVVNLGKVRPLSNLSDATTKSTDKRKLIDEEAAESDLDMV</sequence>
<organism evidence="7">
    <name type="scientific">Drosophila melanogaster</name>
    <name type="common">Fruit fly</name>
    <dbReference type="NCBI Taxonomy" id="7227"/>
    <lineage>
        <taxon>Eukaryota</taxon>
        <taxon>Metazoa</taxon>
        <taxon>Ecdysozoa</taxon>
        <taxon>Arthropoda</taxon>
        <taxon>Hexapoda</taxon>
        <taxon>Insecta</taxon>
        <taxon>Pterygota</taxon>
        <taxon>Neoptera</taxon>
        <taxon>Endopterygota</taxon>
        <taxon>Diptera</taxon>
        <taxon>Brachycera</taxon>
        <taxon>Muscomorpha</taxon>
        <taxon>Ephydroidea</taxon>
        <taxon>Drosophilidae</taxon>
        <taxon>Drosophila</taxon>
        <taxon>Sophophora</taxon>
    </lineage>
</organism>
<accession>Q9VMU8</accession>
<accession>Q8MYZ6</accession>
<proteinExistence type="evidence at protein level"/>
<keyword id="KW-0333">Golgi apparatus</keyword>
<keyword id="KW-0472">Membrane</keyword>
<keyword id="KW-1185">Reference proteome</keyword>
<keyword id="KW-0762">Sugar transport</keyword>
<keyword id="KW-0812">Transmembrane</keyword>
<keyword id="KW-1133">Transmembrane helix</keyword>
<keyword id="KW-0813">Transport</keyword>
<gene>
    <name evidence="6" type="primary">senju</name>
    <name evidence="6" type="ORF">CG14040</name>
</gene>
<name>SENJU_DROME</name>
<protein>
    <recommendedName>
        <fullName evidence="3">UDP-galactose transporter senju</fullName>
    </recommendedName>
</protein>
<dbReference type="EMBL" id="AE014134">
    <property type="protein sequence ID" value="AAF52211.2"/>
    <property type="molecule type" value="Genomic_DNA"/>
</dbReference>
<dbReference type="EMBL" id="AY113459">
    <property type="protein sequence ID" value="AAM29464.1"/>
    <property type="status" value="ALT_FRAME"/>
    <property type="molecule type" value="mRNA"/>
</dbReference>
<dbReference type="RefSeq" id="NP_608902.1">
    <property type="nucleotide sequence ID" value="NM_135058.4"/>
</dbReference>
<dbReference type="SMR" id="Q9VMU8"/>
<dbReference type="FunCoup" id="Q9VMU8">
    <property type="interactions" value="679"/>
</dbReference>
<dbReference type="STRING" id="7227.FBpp0078648"/>
<dbReference type="PaxDb" id="7227-FBpp0078648"/>
<dbReference type="EnsemblMetazoa" id="FBtr0079009">
    <property type="protein sequence ID" value="FBpp0078648"/>
    <property type="gene ID" value="FBgn0031676"/>
</dbReference>
<dbReference type="GeneID" id="33734"/>
<dbReference type="KEGG" id="dme:Dmel_CG14040"/>
<dbReference type="UCSC" id="CG14040-RA">
    <property type="organism name" value="d. melanogaster"/>
</dbReference>
<dbReference type="AGR" id="FB:FBgn0031676"/>
<dbReference type="CTD" id="33734"/>
<dbReference type="FlyBase" id="FBgn0031676">
    <property type="gene designation" value="senju"/>
</dbReference>
<dbReference type="VEuPathDB" id="VectorBase:FBgn0031676"/>
<dbReference type="eggNOG" id="KOG2234">
    <property type="taxonomic scope" value="Eukaryota"/>
</dbReference>
<dbReference type="GeneTree" id="ENSGT00950000182827"/>
<dbReference type="HOGENOM" id="CLU_024645_5_0_1"/>
<dbReference type="InParanoid" id="Q9VMU8"/>
<dbReference type="OMA" id="CLYCREN"/>
<dbReference type="OrthoDB" id="419167at2759"/>
<dbReference type="PhylomeDB" id="Q9VMU8"/>
<dbReference type="BioGRID-ORCS" id="33734">
    <property type="hits" value="1 hit in 1 CRISPR screen"/>
</dbReference>
<dbReference type="GenomeRNAi" id="33734"/>
<dbReference type="PRO" id="PR:Q9VMU8"/>
<dbReference type="Proteomes" id="UP000000803">
    <property type="component" value="Chromosome 2L"/>
</dbReference>
<dbReference type="Bgee" id="FBgn0031676">
    <property type="expression patterns" value="Expressed in dorsal appendage forming follicle cell in ovary and 61 other cell types or tissues"/>
</dbReference>
<dbReference type="GO" id="GO:0005794">
    <property type="term" value="C:Golgi apparatus"/>
    <property type="evidence" value="ECO:0000314"/>
    <property type="project" value="FlyBase"/>
</dbReference>
<dbReference type="GO" id="GO:0005797">
    <property type="term" value="C:Golgi medial cisterna"/>
    <property type="evidence" value="ECO:0000314"/>
    <property type="project" value="FlyBase"/>
</dbReference>
<dbReference type="GO" id="GO:0000139">
    <property type="term" value="C:Golgi membrane"/>
    <property type="evidence" value="ECO:0000318"/>
    <property type="project" value="GO_Central"/>
</dbReference>
<dbReference type="GO" id="GO:0005459">
    <property type="term" value="F:UDP-galactose transmembrane transporter activity"/>
    <property type="evidence" value="ECO:0000314"/>
    <property type="project" value="FlyBase"/>
</dbReference>
<dbReference type="GO" id="GO:0045824">
    <property type="term" value="P:negative regulation of innate immune response"/>
    <property type="evidence" value="ECO:0000315"/>
    <property type="project" value="FlyBase"/>
</dbReference>
<dbReference type="GO" id="GO:0045751">
    <property type="term" value="P:negative regulation of Toll signaling pathway"/>
    <property type="evidence" value="ECO:0000315"/>
    <property type="project" value="FlyBase"/>
</dbReference>
<dbReference type="GO" id="GO:0002225">
    <property type="term" value="P:positive regulation of antimicrobial peptide production"/>
    <property type="evidence" value="ECO:0000316"/>
    <property type="project" value="UniProtKB"/>
</dbReference>
<dbReference type="GO" id="GO:0060050">
    <property type="term" value="P:positive regulation of protein glycosylation"/>
    <property type="evidence" value="ECO:0000315"/>
    <property type="project" value="UniProtKB"/>
</dbReference>
<dbReference type="GO" id="GO:0055085">
    <property type="term" value="P:transmembrane transport"/>
    <property type="evidence" value="ECO:0000318"/>
    <property type="project" value="GO_Central"/>
</dbReference>
<dbReference type="GO" id="GO:0072334">
    <property type="term" value="P:UDP-galactose transmembrane transport"/>
    <property type="evidence" value="ECO:0000314"/>
    <property type="project" value="FlyBase"/>
</dbReference>
<dbReference type="InterPro" id="IPR007271">
    <property type="entry name" value="Nuc_sug_transpt"/>
</dbReference>
<dbReference type="PANTHER" id="PTHR10231">
    <property type="entry name" value="NUCLEOTIDE-SUGAR TRANSMEMBRANE TRANSPORTER"/>
    <property type="match status" value="1"/>
</dbReference>
<dbReference type="Pfam" id="PF04142">
    <property type="entry name" value="Nuc_sug_transp"/>
    <property type="match status" value="1"/>
</dbReference>
<dbReference type="PIRSF" id="PIRSF005799">
    <property type="entry name" value="UDP-gal_transpt"/>
    <property type="match status" value="1"/>
</dbReference>
<reference evidence="7" key="1">
    <citation type="journal article" date="2000" name="Science">
        <title>The genome sequence of Drosophila melanogaster.</title>
        <authorList>
            <person name="Adams M.D."/>
            <person name="Celniker S.E."/>
            <person name="Holt R.A."/>
            <person name="Evans C.A."/>
            <person name="Gocayne J.D."/>
            <person name="Amanatides P.G."/>
            <person name="Scherer S.E."/>
            <person name="Li P.W."/>
            <person name="Hoskins R.A."/>
            <person name="Galle R.F."/>
            <person name="George R.A."/>
            <person name="Lewis S.E."/>
            <person name="Richards S."/>
            <person name="Ashburner M."/>
            <person name="Henderson S.N."/>
            <person name="Sutton G.G."/>
            <person name="Wortman J.R."/>
            <person name="Yandell M.D."/>
            <person name="Zhang Q."/>
            <person name="Chen L.X."/>
            <person name="Brandon R.C."/>
            <person name="Rogers Y.-H.C."/>
            <person name="Blazej R.G."/>
            <person name="Champe M."/>
            <person name="Pfeiffer B.D."/>
            <person name="Wan K.H."/>
            <person name="Doyle C."/>
            <person name="Baxter E.G."/>
            <person name="Helt G."/>
            <person name="Nelson C.R."/>
            <person name="Miklos G.L.G."/>
            <person name="Abril J.F."/>
            <person name="Agbayani A."/>
            <person name="An H.-J."/>
            <person name="Andrews-Pfannkoch C."/>
            <person name="Baldwin D."/>
            <person name="Ballew R.M."/>
            <person name="Basu A."/>
            <person name="Baxendale J."/>
            <person name="Bayraktaroglu L."/>
            <person name="Beasley E.M."/>
            <person name="Beeson K.Y."/>
            <person name="Benos P.V."/>
            <person name="Berman B.P."/>
            <person name="Bhandari D."/>
            <person name="Bolshakov S."/>
            <person name="Borkova D."/>
            <person name="Botchan M.R."/>
            <person name="Bouck J."/>
            <person name="Brokstein P."/>
            <person name="Brottier P."/>
            <person name="Burtis K.C."/>
            <person name="Busam D.A."/>
            <person name="Butler H."/>
            <person name="Cadieu E."/>
            <person name="Center A."/>
            <person name="Chandra I."/>
            <person name="Cherry J.M."/>
            <person name="Cawley S."/>
            <person name="Dahlke C."/>
            <person name="Davenport L.B."/>
            <person name="Davies P."/>
            <person name="de Pablos B."/>
            <person name="Delcher A."/>
            <person name="Deng Z."/>
            <person name="Mays A.D."/>
            <person name="Dew I."/>
            <person name="Dietz S.M."/>
            <person name="Dodson K."/>
            <person name="Doup L.E."/>
            <person name="Downes M."/>
            <person name="Dugan-Rocha S."/>
            <person name="Dunkov B.C."/>
            <person name="Dunn P."/>
            <person name="Durbin K.J."/>
            <person name="Evangelista C.C."/>
            <person name="Ferraz C."/>
            <person name="Ferriera S."/>
            <person name="Fleischmann W."/>
            <person name="Fosler C."/>
            <person name="Gabrielian A.E."/>
            <person name="Garg N.S."/>
            <person name="Gelbart W.M."/>
            <person name="Glasser K."/>
            <person name="Glodek A."/>
            <person name="Gong F."/>
            <person name="Gorrell J.H."/>
            <person name="Gu Z."/>
            <person name="Guan P."/>
            <person name="Harris M."/>
            <person name="Harris N.L."/>
            <person name="Harvey D.A."/>
            <person name="Heiman T.J."/>
            <person name="Hernandez J.R."/>
            <person name="Houck J."/>
            <person name="Hostin D."/>
            <person name="Houston K.A."/>
            <person name="Howland T.J."/>
            <person name="Wei M.-H."/>
            <person name="Ibegwam C."/>
            <person name="Jalali M."/>
            <person name="Kalush F."/>
            <person name="Karpen G.H."/>
            <person name="Ke Z."/>
            <person name="Kennison J.A."/>
            <person name="Ketchum K.A."/>
            <person name="Kimmel B.E."/>
            <person name="Kodira C.D."/>
            <person name="Kraft C.L."/>
            <person name="Kravitz S."/>
            <person name="Kulp D."/>
            <person name="Lai Z."/>
            <person name="Lasko P."/>
            <person name="Lei Y."/>
            <person name="Levitsky A.A."/>
            <person name="Li J.H."/>
            <person name="Li Z."/>
            <person name="Liang Y."/>
            <person name="Lin X."/>
            <person name="Liu X."/>
            <person name="Mattei B."/>
            <person name="McIntosh T.C."/>
            <person name="McLeod M.P."/>
            <person name="McPherson D."/>
            <person name="Merkulov G."/>
            <person name="Milshina N.V."/>
            <person name="Mobarry C."/>
            <person name="Morris J."/>
            <person name="Moshrefi A."/>
            <person name="Mount S.M."/>
            <person name="Moy M."/>
            <person name="Murphy B."/>
            <person name="Murphy L."/>
            <person name="Muzny D.M."/>
            <person name="Nelson D.L."/>
            <person name="Nelson D.R."/>
            <person name="Nelson K.A."/>
            <person name="Nixon K."/>
            <person name="Nusskern D.R."/>
            <person name="Pacleb J.M."/>
            <person name="Palazzolo M."/>
            <person name="Pittman G.S."/>
            <person name="Pan S."/>
            <person name="Pollard J."/>
            <person name="Puri V."/>
            <person name="Reese M.G."/>
            <person name="Reinert K."/>
            <person name="Remington K."/>
            <person name="Saunders R.D.C."/>
            <person name="Scheeler F."/>
            <person name="Shen H."/>
            <person name="Shue B.C."/>
            <person name="Siden-Kiamos I."/>
            <person name="Simpson M."/>
            <person name="Skupski M.P."/>
            <person name="Smith T.J."/>
            <person name="Spier E."/>
            <person name="Spradling A.C."/>
            <person name="Stapleton M."/>
            <person name="Strong R."/>
            <person name="Sun E."/>
            <person name="Svirskas R."/>
            <person name="Tector C."/>
            <person name="Turner R."/>
            <person name="Venter E."/>
            <person name="Wang A.H."/>
            <person name="Wang X."/>
            <person name="Wang Z.-Y."/>
            <person name="Wassarman D.A."/>
            <person name="Weinstock G.M."/>
            <person name="Weissenbach J."/>
            <person name="Williams S.M."/>
            <person name="Woodage T."/>
            <person name="Worley K.C."/>
            <person name="Wu D."/>
            <person name="Yang S."/>
            <person name="Yao Q.A."/>
            <person name="Ye J."/>
            <person name="Yeh R.-F."/>
            <person name="Zaveri J.S."/>
            <person name="Zhan M."/>
            <person name="Zhang G."/>
            <person name="Zhao Q."/>
            <person name="Zheng L."/>
            <person name="Zheng X.H."/>
            <person name="Zhong F.N."/>
            <person name="Zhong W."/>
            <person name="Zhou X."/>
            <person name="Zhu S.C."/>
            <person name="Zhu X."/>
            <person name="Smith H.O."/>
            <person name="Gibbs R.A."/>
            <person name="Myers E.W."/>
            <person name="Rubin G.M."/>
            <person name="Venter J.C."/>
        </authorList>
    </citation>
    <scope>NUCLEOTIDE SEQUENCE [LARGE SCALE GENOMIC DNA]</scope>
    <source>
        <strain evidence="7">Berkeley</strain>
    </source>
</reference>
<reference evidence="7" key="2">
    <citation type="journal article" date="2002" name="Genome Biol.">
        <title>Annotation of the Drosophila melanogaster euchromatic genome: a systematic review.</title>
        <authorList>
            <person name="Misra S."/>
            <person name="Crosby M.A."/>
            <person name="Mungall C.J."/>
            <person name="Matthews B.B."/>
            <person name="Campbell K.S."/>
            <person name="Hradecky P."/>
            <person name="Huang Y."/>
            <person name="Kaminker J.S."/>
            <person name="Millburn G.H."/>
            <person name="Prochnik S.E."/>
            <person name="Smith C.D."/>
            <person name="Tupy J.L."/>
            <person name="Whitfield E.J."/>
            <person name="Bayraktaroglu L."/>
            <person name="Berman B.P."/>
            <person name="Bettencourt B.R."/>
            <person name="Celniker S.E."/>
            <person name="de Grey A.D.N.J."/>
            <person name="Drysdale R.A."/>
            <person name="Harris N.L."/>
            <person name="Richter J."/>
            <person name="Russo S."/>
            <person name="Schroeder A.J."/>
            <person name="Shu S.Q."/>
            <person name="Stapleton M."/>
            <person name="Yamada C."/>
            <person name="Ashburner M."/>
            <person name="Gelbart W.M."/>
            <person name="Rubin G.M."/>
            <person name="Lewis S.E."/>
        </authorList>
    </citation>
    <scope>GENOME REANNOTATION</scope>
    <source>
        <strain evidence="7">Berkeley</strain>
    </source>
</reference>
<reference evidence="5" key="3">
    <citation type="journal article" date="2002" name="Genome Biol.">
        <title>A Drosophila full-length cDNA resource.</title>
        <authorList>
            <person name="Stapleton M."/>
            <person name="Carlson J.W."/>
            <person name="Brokstein P."/>
            <person name="Yu C."/>
            <person name="Champe M."/>
            <person name="George R.A."/>
            <person name="Guarin H."/>
            <person name="Kronmiller B."/>
            <person name="Pacleb J.M."/>
            <person name="Park S."/>
            <person name="Wan K.H."/>
            <person name="Rubin G.M."/>
            <person name="Celniker S.E."/>
        </authorList>
    </citation>
    <scope>NUCLEOTIDE SEQUENCE [LARGE SCALE MRNA]</scope>
    <source>
        <strain evidence="5">Berkeley</strain>
        <tissue evidence="5">Embryo</tissue>
    </source>
</reference>
<reference evidence="4" key="4">
    <citation type="journal article" date="2015" name="Proc. Natl. Acad. Sci. U.S.A.">
        <title>Dynamic regulation of innate immune responses in Drosophila by Senju-mediated glycosylation.</title>
        <authorList>
            <person name="Yamamoto-Hino M."/>
            <person name="Muraoka M."/>
            <person name="Kondo S."/>
            <person name="Ueda R."/>
            <person name="Okano H."/>
            <person name="Goto S."/>
        </authorList>
    </citation>
    <scope>FUNCTION</scope>
    <scope>SUBCELLULAR LOCATION</scope>
    <scope>DEVELOPMENTAL STAGE</scope>
    <scope>DISRUPTION PHENOTYPE</scope>
</reference>
<evidence type="ECO:0000255" key="1"/>
<evidence type="ECO:0000269" key="2">
    <source>
    </source>
</evidence>
<evidence type="ECO:0000303" key="3">
    <source>
    </source>
</evidence>
<evidence type="ECO:0000305" key="4"/>
<evidence type="ECO:0000312" key="5">
    <source>
        <dbReference type="EMBL" id="AAM29464.1"/>
    </source>
</evidence>
<evidence type="ECO:0000312" key="6">
    <source>
        <dbReference type="FlyBase" id="FBgn0031676"/>
    </source>
</evidence>
<evidence type="ECO:0000312" key="7">
    <source>
        <dbReference type="Proteomes" id="UP000000803"/>
    </source>
</evidence>